<evidence type="ECO:0000255" key="1">
    <source>
        <dbReference type="HAMAP-Rule" id="MF_00580"/>
    </source>
</evidence>
<comment type="function">
    <text evidence="1">Together with the chaperonin GroEL, plays an essential role in assisting protein folding. The GroEL-GroES system forms a nano-cage that allows encapsulation of the non-native substrate proteins and provides a physical environment optimized to promote and accelerate protein folding. GroES binds to the apical surface of the GroEL ring, thereby capping the opening of the GroEL channel.</text>
</comment>
<comment type="subunit">
    <text evidence="1">Heptamer of 7 subunits arranged in a ring. Interacts with the chaperonin GroEL.</text>
</comment>
<comment type="subcellular location">
    <subcellularLocation>
        <location evidence="1">Cytoplasm</location>
    </subcellularLocation>
</comment>
<comment type="similarity">
    <text evidence="1">Belongs to the GroES chaperonin family.</text>
</comment>
<organism>
    <name type="scientific">Escherichia coli O6:K15:H31 (strain 536 / UPEC)</name>
    <dbReference type="NCBI Taxonomy" id="362663"/>
    <lineage>
        <taxon>Bacteria</taxon>
        <taxon>Pseudomonadati</taxon>
        <taxon>Pseudomonadota</taxon>
        <taxon>Gammaproteobacteria</taxon>
        <taxon>Enterobacterales</taxon>
        <taxon>Enterobacteriaceae</taxon>
        <taxon>Escherichia</taxon>
    </lineage>
</organism>
<reference key="1">
    <citation type="journal article" date="2006" name="Mol. Microbiol.">
        <title>Role of pathogenicity island-associated integrases in the genome plasticity of uropathogenic Escherichia coli strain 536.</title>
        <authorList>
            <person name="Hochhut B."/>
            <person name="Wilde C."/>
            <person name="Balling G."/>
            <person name="Middendorf B."/>
            <person name="Dobrindt U."/>
            <person name="Brzuszkiewicz E."/>
            <person name="Gottschalk G."/>
            <person name="Carniel E."/>
            <person name="Hacker J."/>
        </authorList>
    </citation>
    <scope>NUCLEOTIDE SEQUENCE [LARGE SCALE GENOMIC DNA]</scope>
    <source>
        <strain>536 / UPEC</strain>
    </source>
</reference>
<dbReference type="EMBL" id="CP000247">
    <property type="protein sequence ID" value="ABG72330.1"/>
    <property type="molecule type" value="Genomic_DNA"/>
</dbReference>
<dbReference type="RefSeq" id="WP_001026276.1">
    <property type="nucleotide sequence ID" value="NC_008253.1"/>
</dbReference>
<dbReference type="SMR" id="Q0T9P9"/>
<dbReference type="KEGG" id="ecp:ECP_4386"/>
<dbReference type="HOGENOM" id="CLU_132825_1_1_6"/>
<dbReference type="Proteomes" id="UP000009182">
    <property type="component" value="Chromosome"/>
</dbReference>
<dbReference type="GO" id="GO:0005737">
    <property type="term" value="C:cytoplasm"/>
    <property type="evidence" value="ECO:0007669"/>
    <property type="project" value="UniProtKB-SubCell"/>
</dbReference>
<dbReference type="GO" id="GO:0005524">
    <property type="term" value="F:ATP binding"/>
    <property type="evidence" value="ECO:0007669"/>
    <property type="project" value="InterPro"/>
</dbReference>
<dbReference type="GO" id="GO:0046872">
    <property type="term" value="F:metal ion binding"/>
    <property type="evidence" value="ECO:0007669"/>
    <property type="project" value="TreeGrafter"/>
</dbReference>
<dbReference type="GO" id="GO:0044183">
    <property type="term" value="F:protein folding chaperone"/>
    <property type="evidence" value="ECO:0007669"/>
    <property type="project" value="InterPro"/>
</dbReference>
<dbReference type="GO" id="GO:0051087">
    <property type="term" value="F:protein-folding chaperone binding"/>
    <property type="evidence" value="ECO:0007669"/>
    <property type="project" value="TreeGrafter"/>
</dbReference>
<dbReference type="GO" id="GO:0051082">
    <property type="term" value="F:unfolded protein binding"/>
    <property type="evidence" value="ECO:0007669"/>
    <property type="project" value="TreeGrafter"/>
</dbReference>
<dbReference type="GO" id="GO:0051085">
    <property type="term" value="P:chaperone cofactor-dependent protein refolding"/>
    <property type="evidence" value="ECO:0007669"/>
    <property type="project" value="TreeGrafter"/>
</dbReference>
<dbReference type="CDD" id="cd00320">
    <property type="entry name" value="cpn10"/>
    <property type="match status" value="1"/>
</dbReference>
<dbReference type="FunFam" id="2.30.33.40:FF:000001">
    <property type="entry name" value="10 kDa chaperonin"/>
    <property type="match status" value="1"/>
</dbReference>
<dbReference type="Gene3D" id="2.30.33.40">
    <property type="entry name" value="GroES chaperonin"/>
    <property type="match status" value="1"/>
</dbReference>
<dbReference type="HAMAP" id="MF_00580">
    <property type="entry name" value="CH10"/>
    <property type="match status" value="1"/>
</dbReference>
<dbReference type="InterPro" id="IPR020818">
    <property type="entry name" value="Chaperonin_GroES"/>
</dbReference>
<dbReference type="InterPro" id="IPR037124">
    <property type="entry name" value="Chaperonin_GroES_sf"/>
</dbReference>
<dbReference type="InterPro" id="IPR018369">
    <property type="entry name" value="Chaprnonin_Cpn10_CS"/>
</dbReference>
<dbReference type="InterPro" id="IPR011032">
    <property type="entry name" value="GroES-like_sf"/>
</dbReference>
<dbReference type="NCBIfam" id="NF001526">
    <property type="entry name" value="PRK00364.1-1"/>
    <property type="match status" value="1"/>
</dbReference>
<dbReference type="NCBIfam" id="NF001527">
    <property type="entry name" value="PRK00364.1-2"/>
    <property type="match status" value="1"/>
</dbReference>
<dbReference type="NCBIfam" id="NF001531">
    <property type="entry name" value="PRK00364.2-2"/>
    <property type="match status" value="1"/>
</dbReference>
<dbReference type="PANTHER" id="PTHR10772">
    <property type="entry name" value="10 KDA HEAT SHOCK PROTEIN"/>
    <property type="match status" value="1"/>
</dbReference>
<dbReference type="PANTHER" id="PTHR10772:SF58">
    <property type="entry name" value="CO-CHAPERONIN GROES"/>
    <property type="match status" value="1"/>
</dbReference>
<dbReference type="Pfam" id="PF00166">
    <property type="entry name" value="Cpn10"/>
    <property type="match status" value="1"/>
</dbReference>
<dbReference type="PRINTS" id="PR00297">
    <property type="entry name" value="CHAPERONIN10"/>
</dbReference>
<dbReference type="SMART" id="SM00883">
    <property type="entry name" value="Cpn10"/>
    <property type="match status" value="1"/>
</dbReference>
<dbReference type="SUPFAM" id="SSF50129">
    <property type="entry name" value="GroES-like"/>
    <property type="match status" value="1"/>
</dbReference>
<dbReference type="PROSITE" id="PS00681">
    <property type="entry name" value="CHAPERONINS_CPN10"/>
    <property type="match status" value="1"/>
</dbReference>
<protein>
    <recommendedName>
        <fullName evidence="1">Co-chaperonin GroES</fullName>
    </recommendedName>
    <alternativeName>
        <fullName evidence="1">10 kDa chaperonin</fullName>
    </alternativeName>
    <alternativeName>
        <fullName evidence="1">Chaperonin-10</fullName>
        <shortName evidence="1">Cpn10</shortName>
    </alternativeName>
</protein>
<accession>Q0T9P9</accession>
<sequence>MNIRPLHDRVIVKRKEVETKSAGGIVLTGSAAAKSTRGEVLAVGNGRILENGEVKPLDVKVGDIVIFNDGYGVKSEKIDNEEVLIMSESDILAIVEA</sequence>
<name>CH10_ECOL5</name>
<feature type="chain" id="PRO_1000025253" description="Co-chaperonin GroES">
    <location>
        <begin position="1"/>
        <end position="97"/>
    </location>
</feature>
<gene>
    <name evidence="1" type="primary">groES</name>
    <name evidence="1" type="synonym">groS</name>
    <name type="ordered locus">ECP_4386</name>
</gene>
<keyword id="KW-0143">Chaperone</keyword>
<keyword id="KW-0963">Cytoplasm</keyword>
<proteinExistence type="inferred from homology"/>